<keyword id="KW-0162">Chylomicron</keyword>
<keyword id="KW-0967">Endosome</keyword>
<keyword id="KW-0272">Extracellular matrix</keyword>
<keyword id="KW-0325">Glycoprotein</keyword>
<keyword id="KW-0345">HDL</keyword>
<keyword id="KW-0358">Heparin-binding</keyword>
<keyword id="KW-0445">Lipid transport</keyword>
<keyword id="KW-0446">Lipid-binding</keyword>
<keyword id="KW-0558">Oxidation</keyword>
<keyword id="KW-0597">Phosphoprotein</keyword>
<keyword id="KW-0677">Repeat</keyword>
<keyword id="KW-0964">Secreted</keyword>
<keyword id="KW-0732">Signal</keyword>
<keyword id="KW-0813">Transport</keyword>
<keyword id="KW-0850">VLDL</keyword>
<evidence type="ECO:0000250" key="1">
    <source>
        <dbReference type="UniProtKB" id="P02649"/>
    </source>
</evidence>
<evidence type="ECO:0000250" key="2">
    <source>
        <dbReference type="UniProtKB" id="P08226"/>
    </source>
</evidence>
<evidence type="ECO:0000255" key="3"/>
<evidence type="ECO:0000305" key="4"/>
<feature type="signal peptide" evidence="3">
    <location>
        <begin position="1"/>
        <end position="18"/>
    </location>
</feature>
<feature type="chain" id="PRO_0000454024" description="Apolipoprotein E">
    <location>
        <begin position="19"/>
        <end position="299"/>
    </location>
</feature>
<feature type="repeat" description="1">
    <location>
        <begin position="75"/>
        <end position="95"/>
    </location>
</feature>
<feature type="repeat" description="2">
    <location>
        <begin position="96"/>
        <end position="117"/>
    </location>
</feature>
<feature type="repeat" description="3">
    <location>
        <begin position="118"/>
        <end position="139"/>
    </location>
</feature>
<feature type="repeat" description="4">
    <location>
        <begin position="140"/>
        <end position="161"/>
    </location>
</feature>
<feature type="repeat" description="5">
    <location>
        <begin position="162"/>
        <end position="183"/>
    </location>
</feature>
<feature type="repeat" description="6">
    <location>
        <begin position="184"/>
        <end position="206"/>
    </location>
</feature>
<feature type="repeat" description="7">
    <location>
        <begin position="207"/>
        <end position="225"/>
    </location>
</feature>
<feature type="repeat" description="8">
    <location>
        <begin position="224"/>
        <end position="242"/>
    </location>
</feature>
<feature type="region of interest" description="8 X 22 AA approximate tandem repeats">
    <location>
        <begin position="74"/>
        <end position="245"/>
    </location>
</feature>
<feature type="region of interest" description="LDL and other lipoprotein receptors binding" evidence="1">
    <location>
        <begin position="152"/>
        <end position="162"/>
    </location>
</feature>
<feature type="region of interest" description="Lipid-binding and lipoprotein association" evidence="1">
    <location>
        <begin position="205"/>
        <end position="273"/>
    </location>
</feature>
<feature type="region of interest" description="Specificity for association with VLDL" evidence="1">
    <location>
        <begin position="261"/>
        <end position="273"/>
    </location>
</feature>
<feature type="binding site" evidence="1">
    <location>
        <begin position="156"/>
        <end position="159"/>
    </location>
    <ligand>
        <name>heparin</name>
        <dbReference type="ChEBI" id="CHEBI:28304"/>
    </ligand>
</feature>
<feature type="binding site" evidence="1">
    <location>
        <begin position="219"/>
        <end position="226"/>
    </location>
    <ligand>
        <name>heparin</name>
        <dbReference type="ChEBI" id="CHEBI:28304"/>
    </ligand>
</feature>
<feature type="modified residue" description="Methionine sulfoxide" evidence="2">
    <location>
        <position position="137"/>
    </location>
</feature>
<feature type="modified residue" description="Phosphoserine" evidence="1">
    <location>
        <position position="141"/>
    </location>
</feature>
<proteinExistence type="inferred from homology"/>
<reference key="1">
    <citation type="journal article" date="2017" name="Genome Biol. Evol.">
        <title>Evolution of the Largest Mammalian Genome.</title>
        <authorList>
            <person name="Evans B.J."/>
            <person name="Upham N.S."/>
            <person name="Golding G.B."/>
            <person name="Ojeda R.A."/>
            <person name="Ojeda A.A."/>
        </authorList>
    </citation>
    <scope>NUCLEOTIDE SEQUENCE [LARGE SCALE GENOMIC DNA]</scope>
    <source>
        <tissue>Muscle</tissue>
    </source>
</reference>
<protein>
    <recommendedName>
        <fullName>Apolipoprotein E</fullName>
        <shortName>Apo-E</shortName>
    </recommendedName>
</protein>
<gene>
    <name type="primary">Apoe</name>
</gene>
<dbReference type="EMBL" id="NDGN011413885">
    <property type="status" value="NOT_ANNOTATED_CDS"/>
    <property type="molecule type" value="Genomic_DNA"/>
</dbReference>
<dbReference type="SMR" id="P0DV00"/>
<dbReference type="GO" id="GO:0042627">
    <property type="term" value="C:chylomicron"/>
    <property type="evidence" value="ECO:0007669"/>
    <property type="project" value="UniProtKB-KW"/>
</dbReference>
<dbReference type="GO" id="GO:0070062">
    <property type="term" value="C:extracellular exosome"/>
    <property type="evidence" value="ECO:0000250"/>
    <property type="project" value="UniProtKB"/>
</dbReference>
<dbReference type="GO" id="GO:0034364">
    <property type="term" value="C:high-density lipoprotein particle"/>
    <property type="evidence" value="ECO:0007669"/>
    <property type="project" value="UniProtKB-KW"/>
</dbReference>
<dbReference type="GO" id="GO:0034362">
    <property type="term" value="C:low-density lipoprotein particle"/>
    <property type="evidence" value="ECO:0007669"/>
    <property type="project" value="TreeGrafter"/>
</dbReference>
<dbReference type="GO" id="GO:0097487">
    <property type="term" value="C:multivesicular body, internal vesicle"/>
    <property type="evidence" value="ECO:0000250"/>
    <property type="project" value="UniProtKB"/>
</dbReference>
<dbReference type="GO" id="GO:0034361">
    <property type="term" value="C:very-low-density lipoprotein particle"/>
    <property type="evidence" value="ECO:0007669"/>
    <property type="project" value="UniProtKB-KW"/>
</dbReference>
<dbReference type="GO" id="GO:0120020">
    <property type="term" value="F:cholesterol transfer activity"/>
    <property type="evidence" value="ECO:0007669"/>
    <property type="project" value="TreeGrafter"/>
</dbReference>
<dbReference type="GO" id="GO:0008201">
    <property type="term" value="F:heparin binding"/>
    <property type="evidence" value="ECO:0007669"/>
    <property type="project" value="UniProtKB-KW"/>
</dbReference>
<dbReference type="GO" id="GO:0060228">
    <property type="term" value="F:phosphatidylcholine-sterol O-acyltransferase activator activity"/>
    <property type="evidence" value="ECO:0007669"/>
    <property type="project" value="TreeGrafter"/>
</dbReference>
<dbReference type="GO" id="GO:0005543">
    <property type="term" value="F:phospholipid binding"/>
    <property type="evidence" value="ECO:0007669"/>
    <property type="project" value="TreeGrafter"/>
</dbReference>
<dbReference type="GO" id="GO:0055090">
    <property type="term" value="P:acylglycerol homeostasis"/>
    <property type="evidence" value="ECO:0007669"/>
    <property type="project" value="TreeGrafter"/>
</dbReference>
<dbReference type="GO" id="GO:0033344">
    <property type="term" value="P:cholesterol efflux"/>
    <property type="evidence" value="ECO:0007669"/>
    <property type="project" value="TreeGrafter"/>
</dbReference>
<dbReference type="GO" id="GO:0008203">
    <property type="term" value="P:cholesterol metabolic process"/>
    <property type="evidence" value="ECO:0007669"/>
    <property type="project" value="TreeGrafter"/>
</dbReference>
<dbReference type="GO" id="GO:0042157">
    <property type="term" value="P:lipoprotein metabolic process"/>
    <property type="evidence" value="ECO:0007669"/>
    <property type="project" value="InterPro"/>
</dbReference>
<dbReference type="GO" id="GO:0032438">
    <property type="term" value="P:melanosome organization"/>
    <property type="evidence" value="ECO:0000250"/>
    <property type="project" value="UniProtKB"/>
</dbReference>
<dbReference type="GO" id="GO:0033700">
    <property type="term" value="P:phospholipid efflux"/>
    <property type="evidence" value="ECO:0007669"/>
    <property type="project" value="TreeGrafter"/>
</dbReference>
<dbReference type="FunFam" id="1.20.120.20:FF:000002">
    <property type="entry name" value="Apolipoprotein E"/>
    <property type="match status" value="1"/>
</dbReference>
<dbReference type="FunFam" id="1.20.120.20:FF:000003">
    <property type="entry name" value="Apolipoprotein E"/>
    <property type="match status" value="1"/>
</dbReference>
<dbReference type="Gene3D" id="1.20.120.20">
    <property type="entry name" value="Apolipoprotein"/>
    <property type="match status" value="2"/>
</dbReference>
<dbReference type="InterPro" id="IPR000074">
    <property type="entry name" value="ApoA_E"/>
</dbReference>
<dbReference type="InterPro" id="IPR050163">
    <property type="entry name" value="Apolipoprotein_A1/A4/E"/>
</dbReference>
<dbReference type="PANTHER" id="PTHR18976">
    <property type="entry name" value="APOLIPOPROTEIN"/>
    <property type="match status" value="1"/>
</dbReference>
<dbReference type="PANTHER" id="PTHR18976:SF2">
    <property type="entry name" value="APOLIPOPROTEIN E"/>
    <property type="match status" value="1"/>
</dbReference>
<dbReference type="Pfam" id="PF01442">
    <property type="entry name" value="Apolipoprotein"/>
    <property type="match status" value="1"/>
</dbReference>
<dbReference type="SUPFAM" id="SSF58113">
    <property type="entry name" value="Apolipoprotein A-I"/>
    <property type="match status" value="1"/>
</dbReference>
<sequence length="299" mass="34122">MKVLCTVLVVTLLAGCRADVEPEPEVLEPAVWKSGQPWELALGRFWDYVRWVQTLSDQVQEELLSSQVTQELTVLMEDTMKAVKAYKSELEQELVPMAEDTKARLSKELQAAQARLGADMEEVRNRLALYRNEMQAMLGQSAEELRARLASHLRKLRKRMLRDAEDLQKRLAVYKDGASEGAERGVSAIRERLGSLVEQSRVRAALTSQPLQERAQAWGKQLRGRLEEVRGQAQDRLEEVREQMEEVRVKIEEQAEAFQARLKGWFEPMVEDMRRQWADLIEKVQAAVGASTPAPTQNP</sequence>
<accession>P0DV00</accession>
<comment type="function">
    <text evidence="1">APOE is an apolipoprotein, a protein associating with lipid particles, that mainly functions in lipoprotein-mediated lipid transport between organs via the plasma and interstitial fluids. APOE is a core component of plasma lipoproteins and is involved in their production, conversion and clearance. Apolipoproteins are amphipathic molecules that interact both with lipids of the lipoprotein particle core and the aqueous environment of the plasma. As such, APOE associates with chylomicrons, chylomicron remnants, very low density lipoproteins (VLDL) and intermediate density lipoproteins (IDL) but shows a preferential binding to high-density lipoproteins (HDL). It also binds a wide range of cellular receptors including the LDL receptor/LDLR, the LDL receptor-related proteins LRP1, LRP2 and LRP8 and the very low-density lipoprotein receptor/VLDLR that mediate the cellular uptake of the APOE-containing lipoprotein particles. Finally, APOE also has a heparin-binding activity and binds heparan-sulfate proteoglycans on the surface of cells, a property that supports the capture and the receptor-mediated uptake of APOE-containing lipoproteins by cells. A main function of APOE is to mediate lipoprotein clearance through the uptake of chylomicrons, VLDLs, and HDLs by hepatocytes. APOE is also involved in the biosynthesis by the liver of VLDLs as well as their uptake by peripheral tissues ensuring the delivery of triglycerides and energy storage in muscle, heart and adipose tissues. By participating in the lipoprotein-mediated distribution of lipids among tissues, APOE plays a critical role in plasma and tissues lipid homeostasis. APOE is also involved in two steps of reverse cholesterol transport, the HDLs-mediated transport of cholesterol from peripheral tissues to the liver, and thereby plays an important role in cholesterol homeostasis. First, it is functionally associated with ABCA1 in the biogenesis of HDLs in tissues. Second, it is enriched in circulating HDLs and mediates their uptake by hepatocytes. APOE also plays an important role in lipid transport in the central nervous system, regulating neuron survival and sprouting.</text>
</comment>
<comment type="subunit">
    <text evidence="1">Homotetramer. May interact with ABCA1; functionally associated with ABCA1 in the biogenesis of HDLs. May interact with APP/A4 amyloid-beta peptide; the interaction is extremely stable in vitro but its physiological significance is unclear. May interact with MAPT. May interact with MAP2. In the cerebrospinal fluid, interacts with secreted SORL1. Interacts with PMEL; this allows the loading of PMEL luminal fragment on ILVs to induce fibril nucleation.</text>
</comment>
<comment type="subcellular location">
    <subcellularLocation>
        <location evidence="1">Secreted</location>
    </subcellularLocation>
    <subcellularLocation>
        <location evidence="1">Secreted</location>
        <location evidence="1">Extracellular space</location>
    </subcellularLocation>
    <subcellularLocation>
        <location evidence="1">Secreted</location>
        <location evidence="1">Extracellular space</location>
        <location evidence="1">Extracellular matrix</location>
    </subcellularLocation>
    <subcellularLocation>
        <location evidence="1">Extracellular vesicle</location>
    </subcellularLocation>
    <subcellularLocation>
        <location evidence="1">Endosome</location>
        <location evidence="1">Multivesicular body</location>
    </subcellularLocation>
    <text evidence="1">In the plasma, APOE is associated with chylomicrons, chylomicrons remnants, VLDL, LDL and HDL lipoproteins. Lipid poor oligomeric APOE is associated with the extracellular matrix in a calcium- and heparan-sulfate proteoglycans-dependent manner. Lipidation induces the release from the extracellular matrix. Colocalizes with CD63 and PMEL at exosomes and in intraluminal vesicles within multivesicular endosomes.</text>
</comment>
<comment type="PTM">
    <text evidence="1">APOE exists as multiple glycosylated and sialylated glycoforms within cells and in plasma. The extent of glycosylation and sialylation are tissue and context specific.</text>
</comment>
<comment type="PTM">
    <text evidence="1">Glycated in plasma VLDL.</text>
</comment>
<comment type="PTM">
    <text evidence="1">Phosphorylated by FAM20C in the extracellular medium.</text>
</comment>
<comment type="similarity">
    <text evidence="4">Belongs to the apolipoprotein A1/A4/E family.</text>
</comment>
<organism>
    <name type="scientific">Tympanoctomys barrerae</name>
    <name type="common">Plains viscacha rat</name>
    <dbReference type="NCBI Taxonomy" id="61882"/>
    <lineage>
        <taxon>Eukaryota</taxon>
        <taxon>Metazoa</taxon>
        <taxon>Chordata</taxon>
        <taxon>Craniata</taxon>
        <taxon>Vertebrata</taxon>
        <taxon>Euteleostomi</taxon>
        <taxon>Mammalia</taxon>
        <taxon>Eutheria</taxon>
        <taxon>Euarchontoglires</taxon>
        <taxon>Glires</taxon>
        <taxon>Rodentia</taxon>
        <taxon>Hystricomorpha</taxon>
        <taxon>Octodontidae</taxon>
        <taxon>Tympanoctomys</taxon>
    </lineage>
</organism>
<name>APOE_TYMBA</name>